<organism>
    <name type="scientific">Shewanella baltica (strain OS195)</name>
    <dbReference type="NCBI Taxonomy" id="399599"/>
    <lineage>
        <taxon>Bacteria</taxon>
        <taxon>Pseudomonadati</taxon>
        <taxon>Pseudomonadota</taxon>
        <taxon>Gammaproteobacteria</taxon>
        <taxon>Alteromonadales</taxon>
        <taxon>Shewanellaceae</taxon>
        <taxon>Shewanella</taxon>
    </lineage>
</organism>
<name>Y1905_SHEB9</name>
<proteinExistence type="inferred from homology"/>
<reference key="1">
    <citation type="submission" date="2007-11" db="EMBL/GenBank/DDBJ databases">
        <title>Complete sequence of chromosome of Shewanella baltica OS195.</title>
        <authorList>
            <consortium name="US DOE Joint Genome Institute"/>
            <person name="Copeland A."/>
            <person name="Lucas S."/>
            <person name="Lapidus A."/>
            <person name="Barry K."/>
            <person name="Glavina del Rio T."/>
            <person name="Dalin E."/>
            <person name="Tice H."/>
            <person name="Pitluck S."/>
            <person name="Chain P."/>
            <person name="Malfatti S."/>
            <person name="Shin M."/>
            <person name="Vergez L."/>
            <person name="Schmutz J."/>
            <person name="Larimer F."/>
            <person name="Land M."/>
            <person name="Hauser L."/>
            <person name="Kyrpides N."/>
            <person name="Kim E."/>
            <person name="Brettar I."/>
            <person name="Rodrigues J."/>
            <person name="Konstantinidis K."/>
            <person name="Klappenbach J."/>
            <person name="Hofle M."/>
            <person name="Tiedje J."/>
            <person name="Richardson P."/>
        </authorList>
    </citation>
    <scope>NUCLEOTIDE SEQUENCE [LARGE SCALE GENOMIC DNA]</scope>
    <source>
        <strain>OS195</strain>
    </source>
</reference>
<sequence>MAFWQSKTLAQMSATEWESLCDGCGKCCLNKLIDDETEDLYYTNAACLLLDHQTAGCQHYSDRFTHVPQCTVITIDNIHELTWLPDSCAYRRLAAGRELPSWHPLLTGSKEAMHLAGMSIQGKVVDERRVKDIEDHIVLWPLKDVD</sequence>
<evidence type="ECO:0000255" key="1">
    <source>
        <dbReference type="HAMAP-Rule" id="MF_00676"/>
    </source>
</evidence>
<protein>
    <recommendedName>
        <fullName evidence="1">UPF0260 protein Sbal195_1905</fullName>
    </recommendedName>
</protein>
<accession>A9KYY8</accession>
<dbReference type="EMBL" id="CP000891">
    <property type="protein sequence ID" value="ABX49076.1"/>
    <property type="molecule type" value="Genomic_DNA"/>
</dbReference>
<dbReference type="RefSeq" id="WP_006081366.1">
    <property type="nucleotide sequence ID" value="NC_009997.1"/>
</dbReference>
<dbReference type="KEGG" id="sbn:Sbal195_1905"/>
<dbReference type="HOGENOM" id="CLU_109769_0_1_6"/>
<dbReference type="Proteomes" id="UP000000770">
    <property type="component" value="Chromosome"/>
</dbReference>
<dbReference type="HAMAP" id="MF_00676">
    <property type="entry name" value="UPF0260"/>
    <property type="match status" value="1"/>
</dbReference>
<dbReference type="InterPro" id="IPR005358">
    <property type="entry name" value="Puta_zinc/iron-chelating_dom"/>
</dbReference>
<dbReference type="InterPro" id="IPR008228">
    <property type="entry name" value="UCP006173"/>
</dbReference>
<dbReference type="NCBIfam" id="NF003500">
    <property type="entry name" value="PRK05170.1-4"/>
    <property type="match status" value="1"/>
</dbReference>
<dbReference type="NCBIfam" id="NF003501">
    <property type="entry name" value="PRK05170.1-5"/>
    <property type="match status" value="1"/>
</dbReference>
<dbReference type="NCBIfam" id="NF003507">
    <property type="entry name" value="PRK05170.2-5"/>
    <property type="match status" value="1"/>
</dbReference>
<dbReference type="PANTHER" id="PTHR37421">
    <property type="entry name" value="UPF0260 PROTEIN YCGN"/>
    <property type="match status" value="1"/>
</dbReference>
<dbReference type="PANTHER" id="PTHR37421:SF1">
    <property type="entry name" value="UPF0260 PROTEIN YCGN"/>
    <property type="match status" value="1"/>
</dbReference>
<dbReference type="Pfam" id="PF03692">
    <property type="entry name" value="CxxCxxCC"/>
    <property type="match status" value="1"/>
</dbReference>
<dbReference type="PIRSF" id="PIRSF006173">
    <property type="entry name" value="UCP006173"/>
    <property type="match status" value="1"/>
</dbReference>
<feature type="chain" id="PRO_1000082974" description="UPF0260 protein Sbal195_1905">
    <location>
        <begin position="1"/>
        <end position="146"/>
    </location>
</feature>
<gene>
    <name type="ordered locus">Sbal195_1905</name>
</gene>
<comment type="similarity">
    <text evidence="1">Belongs to the UPF0260 family.</text>
</comment>